<protein>
    <recommendedName>
        <fullName>Condensin complex subunit 2</fullName>
    </recommendedName>
    <alternativeName>
        <fullName>Chromosome-associated protein H</fullName>
        <shortName>AtCAP-H</shortName>
    </alternativeName>
    <alternativeName>
        <fullName>Non-SMC condensin I complex subunit H</fullName>
    </alternativeName>
    <alternativeName>
        <fullName>Protein EMBRYO DEFECTIVE 2795</fullName>
    </alternativeName>
</protein>
<comment type="function">
    <text evidence="1">Regulatory subunit of the condensin complex, a complex required for conversion of interphase chromatin into mitotic-like condense chromosomes. The condensin complex probably introduces positive supercoils into relaxed DNA in the presence of type I topoisomerases and converts nicked DNA into positive knotted forms in the presence of type II topoisomerases (By similarity). Essential protein.</text>
</comment>
<comment type="subunit">
    <text evidence="1">Component of the condensin complex.</text>
</comment>
<comment type="subcellular location">
    <subcellularLocation>
        <location evidence="3">Cytoplasm</location>
    </subcellularLocation>
    <subcellularLocation>
        <location evidence="3">Chromosome</location>
    </subcellularLocation>
    <text>Localized at mitotic chromosomes from pro-metaphase to telophase. During interphase, mainly found in cytoplasm.</text>
</comment>
<comment type="tissue specificity">
    <text evidence="3">Mostly expressed in flower buds and flowers, and, to a lower extent, in roots, stems, leaves and seedlings.</text>
</comment>
<comment type="disruption phenotype">
    <text evidence="4">Embryo development arrested at the preglobular stage.</text>
</comment>
<comment type="similarity">
    <text evidence="5">Belongs to the CND2 (condensin subunit 2) family.</text>
</comment>
<comment type="sequence caution" evidence="5">
    <conflict type="erroneous gene model prediction">
        <sequence resource="EMBL-CDS" id="AAC25941"/>
    </conflict>
</comment>
<evidence type="ECO:0000250" key="1"/>
<evidence type="ECO:0000256" key="2">
    <source>
        <dbReference type="SAM" id="MobiDB-lite"/>
    </source>
</evidence>
<evidence type="ECO:0000269" key="3">
    <source>
    </source>
</evidence>
<evidence type="ECO:0000269" key="4">
    <source>
    </source>
</evidence>
<evidence type="ECO:0000305" key="5"/>
<keyword id="KW-0131">Cell cycle</keyword>
<keyword id="KW-0132">Cell division</keyword>
<keyword id="KW-0158">Chromosome</keyword>
<keyword id="KW-0963">Cytoplasm</keyword>
<keyword id="KW-0226">DNA condensation</keyword>
<keyword id="KW-0498">Mitosis</keyword>
<keyword id="KW-1185">Reference proteome</keyword>
<name>CND2_ARATH</name>
<gene>
    <name type="primary">CAPH</name>
    <name type="synonym">EMB2795</name>
    <name type="ordered locus">At2g32590</name>
    <name type="ORF">T26B15</name>
</gene>
<sequence length="671" mass="75365">MDESLTPNPKQKPASTTTRIQAPTSPFFLGSNDDRLEREQARAARAAASRRRSVIFARGSQPETESDPCFDKQQILELFQNCIKLASENKINQKNTWELNLIDHLCEIIKVEDENNTETNFQKASCTLEAGVKIYSMRVDSVHSEAYKVLGGITRAGHDDGGDHEDAAGAVENATNQKKQPEKKISPLSTLEPSFDALNVKKFDVAFAVDPLYHQTSAQFDEGGAKGLLLNNLGVYGGCQVLFDSQEIPGKLVSSANKHDKSETIDLSFVKECVEQMVLNMRKKDEIVPSLRAIINQFDEENQRPSDTFSCGQQTTESFDISHGNDASYADDDEGYENFGTSFDYEGQSGDVDENFGPNEAEPIYSNFHEEVEPASLQDMDSDDRLENVDDYLFLSLGISSKQNSWAGPDHWKYRKTKGPDVQPASEIKSSPPAKKTRKKKQAEPELDFAKALEEEMPDIFAPPKNPKTLLLPASRTPCQTKLPEDCHYQPENLIKLFLLPNVMCLGRRRRKNSGETSRQQPDDYEHGESWGNDNVYDDDDGPFDDNENDQSDAEDTNTLISQPRQVNKIDVQYDKASKQVDVQVLKETLWECLQESHQPPIQDEEHQQEPPESRSFKVLLASFPDDCQAAERTQDISPHLCFICLLHLANEHNLSLIGSQNLDDLTIHLA</sequence>
<organism>
    <name type="scientific">Arabidopsis thaliana</name>
    <name type="common">Mouse-ear cress</name>
    <dbReference type="NCBI Taxonomy" id="3702"/>
    <lineage>
        <taxon>Eukaryota</taxon>
        <taxon>Viridiplantae</taxon>
        <taxon>Streptophyta</taxon>
        <taxon>Embryophyta</taxon>
        <taxon>Tracheophyta</taxon>
        <taxon>Spermatophyta</taxon>
        <taxon>Magnoliopsida</taxon>
        <taxon>eudicotyledons</taxon>
        <taxon>Gunneridae</taxon>
        <taxon>Pentapetalae</taxon>
        <taxon>rosids</taxon>
        <taxon>malvids</taxon>
        <taxon>Brassicales</taxon>
        <taxon>Brassicaceae</taxon>
        <taxon>Camelineae</taxon>
        <taxon>Arabidopsis</taxon>
    </lineage>
</organism>
<proteinExistence type="evidence at protein level"/>
<dbReference type="EMBL" id="AB193292">
    <property type="protein sequence ID" value="BAD95575.1"/>
    <property type="molecule type" value="mRNA"/>
</dbReference>
<dbReference type="EMBL" id="AC004681">
    <property type="protein sequence ID" value="AAC25941.1"/>
    <property type="status" value="ALT_SEQ"/>
    <property type="molecule type" value="Genomic_DNA"/>
</dbReference>
<dbReference type="EMBL" id="CP002685">
    <property type="protein sequence ID" value="AEC08703.1"/>
    <property type="molecule type" value="Genomic_DNA"/>
</dbReference>
<dbReference type="PIR" id="T02558">
    <property type="entry name" value="T02558"/>
</dbReference>
<dbReference type="RefSeq" id="NP_180818.2">
    <property type="nucleotide sequence ID" value="NM_128818.3"/>
</dbReference>
<dbReference type="FunCoup" id="Q564K3">
    <property type="interactions" value="2362"/>
</dbReference>
<dbReference type="STRING" id="3702.Q564K3"/>
<dbReference type="PaxDb" id="3702-AT2G32590.1"/>
<dbReference type="ProteomicsDB" id="241240"/>
<dbReference type="EnsemblPlants" id="AT2G32590.1">
    <property type="protein sequence ID" value="AT2G32590.1"/>
    <property type="gene ID" value="AT2G32590"/>
</dbReference>
<dbReference type="GeneID" id="817819"/>
<dbReference type="Gramene" id="AT2G32590.1">
    <property type="protein sequence ID" value="AT2G32590.1"/>
    <property type="gene ID" value="AT2G32590"/>
</dbReference>
<dbReference type="KEGG" id="ath:AT2G32590"/>
<dbReference type="Araport" id="AT2G32590"/>
<dbReference type="TAIR" id="AT2G32590">
    <property type="gene designation" value="EMB2795"/>
</dbReference>
<dbReference type="eggNOG" id="KOG2328">
    <property type="taxonomic scope" value="Eukaryota"/>
</dbReference>
<dbReference type="HOGENOM" id="CLU_010510_2_0_1"/>
<dbReference type="InParanoid" id="Q564K3"/>
<dbReference type="OMA" id="FRKTCAD"/>
<dbReference type="PhylomeDB" id="Q564K3"/>
<dbReference type="PRO" id="PR:Q564K3"/>
<dbReference type="Proteomes" id="UP000006548">
    <property type="component" value="Chromosome 2"/>
</dbReference>
<dbReference type="ExpressionAtlas" id="Q564K3">
    <property type="expression patterns" value="baseline and differential"/>
</dbReference>
<dbReference type="GO" id="GO:0000793">
    <property type="term" value="C:condensed chromosome"/>
    <property type="evidence" value="ECO:0000314"/>
    <property type="project" value="UniProtKB"/>
</dbReference>
<dbReference type="GO" id="GO:0000796">
    <property type="term" value="C:condensin complex"/>
    <property type="evidence" value="ECO:0007669"/>
    <property type="project" value="InterPro"/>
</dbReference>
<dbReference type="GO" id="GO:0005737">
    <property type="term" value="C:cytoplasm"/>
    <property type="evidence" value="ECO:0000314"/>
    <property type="project" value="UniProtKB"/>
</dbReference>
<dbReference type="GO" id="GO:0051301">
    <property type="term" value="P:cell division"/>
    <property type="evidence" value="ECO:0007669"/>
    <property type="project" value="UniProtKB-KW"/>
</dbReference>
<dbReference type="GO" id="GO:0007076">
    <property type="term" value="P:mitotic chromosome condensation"/>
    <property type="evidence" value="ECO:0007669"/>
    <property type="project" value="InterPro"/>
</dbReference>
<dbReference type="InterPro" id="IPR022816">
    <property type="entry name" value="Condensin_barren_su2"/>
</dbReference>
<dbReference type="PANTHER" id="PTHR13108">
    <property type="entry name" value="CONDENSIN COMPLEX SUBUNIT 2"/>
    <property type="match status" value="1"/>
</dbReference>
<dbReference type="PANTHER" id="PTHR13108:SF9">
    <property type="entry name" value="CONDENSIN COMPLEX SUBUNIT 2"/>
    <property type="match status" value="1"/>
</dbReference>
<dbReference type="Pfam" id="PF05786">
    <property type="entry name" value="Cnd2"/>
    <property type="match status" value="2"/>
</dbReference>
<dbReference type="PIRSF" id="PIRSF017126">
    <property type="entry name" value="Condensin_H"/>
    <property type="match status" value="1"/>
</dbReference>
<feature type="chain" id="PRO_0000419281" description="Condensin complex subunit 2">
    <location>
        <begin position="1"/>
        <end position="671"/>
    </location>
</feature>
<feature type="region of interest" description="Disordered" evidence="2">
    <location>
        <begin position="1"/>
        <end position="33"/>
    </location>
</feature>
<feature type="region of interest" description="Disordered" evidence="2">
    <location>
        <begin position="404"/>
        <end position="444"/>
    </location>
</feature>
<feature type="region of interest" description="Disordered" evidence="2">
    <location>
        <begin position="510"/>
        <end position="564"/>
    </location>
</feature>
<feature type="short sequence motif" description="Kleisin-gamma middle domain (GM domain) involved in chromosome-binding">
    <location>
        <begin position="406"/>
        <end position="415"/>
    </location>
</feature>
<feature type="compositionally biased region" description="Polar residues" evidence="2">
    <location>
        <begin position="1"/>
        <end position="24"/>
    </location>
</feature>
<feature type="compositionally biased region" description="Acidic residues" evidence="2">
    <location>
        <begin position="536"/>
        <end position="556"/>
    </location>
</feature>
<feature type="mutagenesis site" description="Loss of chromosome-binding." evidence="3">
    <location>
        <begin position="406"/>
        <end position="415"/>
    </location>
</feature>
<reference key="1">
    <citation type="journal article" date="2005" name="Planta">
        <title>Characterization and dynamic analysis of Arabidopsis condensin subunits, AtCAP-H and AtCAP-H2.</title>
        <authorList>
            <person name="Fujimoto S."/>
            <person name="Yonemura M."/>
            <person name="Matsunaga S."/>
            <person name="Nakagawa T."/>
            <person name="Uchiyama S."/>
            <person name="Fukui K."/>
        </authorList>
    </citation>
    <scope>NUCLEOTIDE SEQUENCE [MRNA]</scope>
    <scope>SUBCELLULAR LOCATION</scope>
    <scope>TISSUE SPECIFICITY</scope>
    <scope>GM DOMAIN</scope>
    <scope>MUTAGENESIS OF 406-TRP--ARG-415</scope>
    <source>
        <strain>cv. Columbia</strain>
    </source>
</reference>
<reference key="2">
    <citation type="journal article" date="1999" name="Nature">
        <title>Sequence and analysis of chromosome 2 of the plant Arabidopsis thaliana.</title>
        <authorList>
            <person name="Lin X."/>
            <person name="Kaul S."/>
            <person name="Rounsley S.D."/>
            <person name="Shea T.P."/>
            <person name="Benito M.-I."/>
            <person name="Town C.D."/>
            <person name="Fujii C.Y."/>
            <person name="Mason T.M."/>
            <person name="Bowman C.L."/>
            <person name="Barnstead M.E."/>
            <person name="Feldblyum T.V."/>
            <person name="Buell C.R."/>
            <person name="Ketchum K.A."/>
            <person name="Lee J.J."/>
            <person name="Ronning C.M."/>
            <person name="Koo H.L."/>
            <person name="Moffat K.S."/>
            <person name="Cronin L.A."/>
            <person name="Shen M."/>
            <person name="Pai G."/>
            <person name="Van Aken S."/>
            <person name="Umayam L."/>
            <person name="Tallon L.J."/>
            <person name="Gill J.E."/>
            <person name="Adams M.D."/>
            <person name="Carrera A.J."/>
            <person name="Creasy T.H."/>
            <person name="Goodman H.M."/>
            <person name="Somerville C.R."/>
            <person name="Copenhaver G.P."/>
            <person name="Preuss D."/>
            <person name="Nierman W.C."/>
            <person name="White O."/>
            <person name="Eisen J.A."/>
            <person name="Salzberg S.L."/>
            <person name="Fraser C.M."/>
            <person name="Venter J.C."/>
        </authorList>
    </citation>
    <scope>NUCLEOTIDE SEQUENCE [LARGE SCALE GENOMIC DNA]</scope>
    <source>
        <strain>cv. Columbia</strain>
    </source>
</reference>
<reference key="3">
    <citation type="journal article" date="2017" name="Plant J.">
        <title>Araport11: a complete reannotation of the Arabidopsis thaliana reference genome.</title>
        <authorList>
            <person name="Cheng C.Y."/>
            <person name="Krishnakumar V."/>
            <person name="Chan A.P."/>
            <person name="Thibaud-Nissen F."/>
            <person name="Schobel S."/>
            <person name="Town C.D."/>
        </authorList>
    </citation>
    <scope>GENOME REANNOTATION</scope>
    <source>
        <strain>cv. Columbia</strain>
    </source>
</reference>
<reference key="4">
    <citation type="journal article" date="2008" name="C. R. Biol.">
        <title>The importance of being essential: EMBRYO-DEFECTIVE genes in Arabidopsis.</title>
        <authorList>
            <person name="Devic M."/>
        </authorList>
    </citation>
    <scope>IDENTIFICATION</scope>
    <scope>DISRUPTION PHENOTYPE</scope>
</reference>
<accession>Q564K3</accession>
<accession>O80896</accession>